<keyword id="KW-0963">Cytoplasm</keyword>
<keyword id="KW-0342">GTP-binding</keyword>
<keyword id="KW-0378">Hydrolase</keyword>
<keyword id="KW-0460">Magnesium</keyword>
<keyword id="KW-0479">Metal-binding</keyword>
<keyword id="KW-0547">Nucleotide-binding</keyword>
<keyword id="KW-1185">Reference proteome</keyword>
<reference key="1">
    <citation type="journal article" date="2009" name="Appl. Environ. Microbiol.">
        <title>Genomic analysis of 'Elusimicrobium minutum,' the first cultivated representative of the phylum 'Elusimicrobia' (formerly termite group 1).</title>
        <authorList>
            <person name="Herlemann D.P.R."/>
            <person name="Geissinger O."/>
            <person name="Ikeda-Ohtsubo W."/>
            <person name="Kunin V."/>
            <person name="Sun H."/>
            <person name="Lapidus A."/>
            <person name="Hugenholtz P."/>
            <person name="Brune A."/>
        </authorList>
    </citation>
    <scope>NUCLEOTIDE SEQUENCE [LARGE SCALE GENOMIC DNA]</scope>
    <source>
        <strain>Pei191</strain>
    </source>
</reference>
<accession>B2KAW2</accession>
<name>OBG_ELUMP</name>
<sequence length="458" mass="50527">MSFLDRVKIYVKAGKGGDGCLSFRREKFIEFGGPNGGNGGKGGDVYIKTERNLTTLLELAYNPHIEAKNGEKGGTYNKTGVGADDLTIYVPCGTIVKKDGEIIADLTEEGQSVLVAKGGRGGRGNQSFKTHSNTAPRISEIGQPGEEITLYLELKVLADLGLVGFPNAGKSTFLSRVSAARPKIADYPFTTLNPNLGIAMHKKVSFVIADIPGIIEGASEGKGLGHQFLKHIERTRVLLHLVDPMGFKDIDAVESVKVIEKELKTFDRELAKKPRIIALNKADLPEAKEVYNKIVKKYKKHKVFLISAATGEGVDKVLNEIVKVISATPVPNVAISKSTVAVHGVEPLFKIVPLEDGRVQVFGRKIEDMVNMTHFNQLQGVERLRNIFKKIGLEKALIKKGVMPGDIIVVGQKEFEWSGTELDSERAEQPDFEGYKRRTTQAERLEKRRQRRLKKEEK</sequence>
<gene>
    <name evidence="1" type="primary">obg</name>
    <name type="ordered locus">Emin_0092</name>
</gene>
<feature type="chain" id="PRO_0000385903" description="GTPase Obg">
    <location>
        <begin position="1"/>
        <end position="458"/>
    </location>
</feature>
<feature type="domain" description="Obg" evidence="3">
    <location>
        <begin position="1"/>
        <end position="157"/>
    </location>
</feature>
<feature type="domain" description="OBG-type G" evidence="1">
    <location>
        <begin position="158"/>
        <end position="326"/>
    </location>
</feature>
<feature type="domain" description="OCT" evidence="2">
    <location>
        <begin position="341"/>
        <end position="419"/>
    </location>
</feature>
<feature type="region of interest" description="Disordered" evidence="4">
    <location>
        <begin position="420"/>
        <end position="458"/>
    </location>
</feature>
<feature type="compositionally biased region" description="Basic and acidic residues" evidence="4">
    <location>
        <begin position="423"/>
        <end position="446"/>
    </location>
</feature>
<feature type="compositionally biased region" description="Basic residues" evidence="4">
    <location>
        <begin position="447"/>
        <end position="458"/>
    </location>
</feature>
<feature type="binding site" evidence="1">
    <location>
        <begin position="164"/>
        <end position="171"/>
    </location>
    <ligand>
        <name>GTP</name>
        <dbReference type="ChEBI" id="CHEBI:37565"/>
    </ligand>
</feature>
<feature type="binding site" evidence="1">
    <location>
        <position position="171"/>
    </location>
    <ligand>
        <name>Mg(2+)</name>
        <dbReference type="ChEBI" id="CHEBI:18420"/>
    </ligand>
</feature>
<feature type="binding site" evidence="1">
    <location>
        <begin position="189"/>
        <end position="193"/>
    </location>
    <ligand>
        <name>GTP</name>
        <dbReference type="ChEBI" id="CHEBI:37565"/>
    </ligand>
</feature>
<feature type="binding site" evidence="1">
    <location>
        <position position="191"/>
    </location>
    <ligand>
        <name>Mg(2+)</name>
        <dbReference type="ChEBI" id="CHEBI:18420"/>
    </ligand>
</feature>
<feature type="binding site" evidence="1">
    <location>
        <begin position="210"/>
        <end position="213"/>
    </location>
    <ligand>
        <name>GTP</name>
        <dbReference type="ChEBI" id="CHEBI:37565"/>
    </ligand>
</feature>
<feature type="binding site" evidence="1">
    <location>
        <begin position="280"/>
        <end position="283"/>
    </location>
    <ligand>
        <name>GTP</name>
        <dbReference type="ChEBI" id="CHEBI:37565"/>
    </ligand>
</feature>
<feature type="binding site" evidence="1">
    <location>
        <begin position="307"/>
        <end position="309"/>
    </location>
    <ligand>
        <name>GTP</name>
        <dbReference type="ChEBI" id="CHEBI:37565"/>
    </ligand>
</feature>
<comment type="function">
    <text evidence="1">An essential GTPase which binds GTP, GDP and possibly (p)ppGpp with moderate affinity, with high nucleotide exchange rates and a fairly low GTP hydrolysis rate. Plays a role in control of the cell cycle, stress response, ribosome biogenesis and in those bacteria that undergo differentiation, in morphogenesis control.</text>
</comment>
<comment type="cofactor">
    <cofactor evidence="1">
        <name>Mg(2+)</name>
        <dbReference type="ChEBI" id="CHEBI:18420"/>
    </cofactor>
</comment>
<comment type="subunit">
    <text evidence="1">Monomer.</text>
</comment>
<comment type="subcellular location">
    <subcellularLocation>
        <location evidence="1">Cytoplasm</location>
    </subcellularLocation>
</comment>
<comment type="similarity">
    <text evidence="1">Belongs to the TRAFAC class OBG-HflX-like GTPase superfamily. OBG GTPase family.</text>
</comment>
<dbReference type="EC" id="3.6.5.-" evidence="1"/>
<dbReference type="EMBL" id="CP001055">
    <property type="protein sequence ID" value="ACC97658.1"/>
    <property type="molecule type" value="Genomic_DNA"/>
</dbReference>
<dbReference type="RefSeq" id="WP_012414273.1">
    <property type="nucleotide sequence ID" value="NC_010644.1"/>
</dbReference>
<dbReference type="SMR" id="B2KAW2"/>
<dbReference type="STRING" id="445932.Emin_0092"/>
<dbReference type="KEGG" id="emi:Emin_0092"/>
<dbReference type="HOGENOM" id="CLU_011747_2_1_0"/>
<dbReference type="OrthoDB" id="9807318at2"/>
<dbReference type="Proteomes" id="UP000001029">
    <property type="component" value="Chromosome"/>
</dbReference>
<dbReference type="GO" id="GO:0005737">
    <property type="term" value="C:cytoplasm"/>
    <property type="evidence" value="ECO:0007669"/>
    <property type="project" value="UniProtKB-SubCell"/>
</dbReference>
<dbReference type="GO" id="GO:0005525">
    <property type="term" value="F:GTP binding"/>
    <property type="evidence" value="ECO:0007669"/>
    <property type="project" value="UniProtKB-UniRule"/>
</dbReference>
<dbReference type="GO" id="GO:0003924">
    <property type="term" value="F:GTPase activity"/>
    <property type="evidence" value="ECO:0007669"/>
    <property type="project" value="UniProtKB-UniRule"/>
</dbReference>
<dbReference type="GO" id="GO:0000287">
    <property type="term" value="F:magnesium ion binding"/>
    <property type="evidence" value="ECO:0007669"/>
    <property type="project" value="InterPro"/>
</dbReference>
<dbReference type="GO" id="GO:0042254">
    <property type="term" value="P:ribosome biogenesis"/>
    <property type="evidence" value="ECO:0007669"/>
    <property type="project" value="UniProtKB-UniRule"/>
</dbReference>
<dbReference type="CDD" id="cd01898">
    <property type="entry name" value="Obg"/>
    <property type="match status" value="1"/>
</dbReference>
<dbReference type="FunFam" id="2.70.210.12:FF:000001">
    <property type="entry name" value="GTPase Obg"/>
    <property type="match status" value="1"/>
</dbReference>
<dbReference type="Gene3D" id="3.30.300.350">
    <property type="entry name" value="GTP-binding protein OBG, C-terminal domain"/>
    <property type="match status" value="1"/>
</dbReference>
<dbReference type="Gene3D" id="2.70.210.12">
    <property type="entry name" value="GTP1/OBG domain"/>
    <property type="match status" value="1"/>
</dbReference>
<dbReference type="Gene3D" id="3.40.50.300">
    <property type="entry name" value="P-loop containing nucleotide triphosphate hydrolases"/>
    <property type="match status" value="1"/>
</dbReference>
<dbReference type="HAMAP" id="MF_01454">
    <property type="entry name" value="GTPase_Obg"/>
    <property type="match status" value="1"/>
</dbReference>
<dbReference type="InterPro" id="IPR031167">
    <property type="entry name" value="G_OBG"/>
</dbReference>
<dbReference type="InterPro" id="IPR006073">
    <property type="entry name" value="GTP-bd"/>
</dbReference>
<dbReference type="InterPro" id="IPR014100">
    <property type="entry name" value="GTP-bd_Obg/CgtA"/>
</dbReference>
<dbReference type="InterPro" id="IPR036346">
    <property type="entry name" value="GTP-bd_prot_GTP1/OBG_C_sf"/>
</dbReference>
<dbReference type="InterPro" id="IPR006074">
    <property type="entry name" value="GTP1-OBG_CS"/>
</dbReference>
<dbReference type="InterPro" id="IPR006169">
    <property type="entry name" value="GTP1_OBG_dom"/>
</dbReference>
<dbReference type="InterPro" id="IPR036726">
    <property type="entry name" value="GTP1_OBG_dom_sf"/>
</dbReference>
<dbReference type="InterPro" id="IPR045086">
    <property type="entry name" value="OBG_GTPase"/>
</dbReference>
<dbReference type="InterPro" id="IPR015349">
    <property type="entry name" value="OCT_dom"/>
</dbReference>
<dbReference type="InterPro" id="IPR027417">
    <property type="entry name" value="P-loop_NTPase"/>
</dbReference>
<dbReference type="InterPro" id="IPR005225">
    <property type="entry name" value="Small_GTP-bd"/>
</dbReference>
<dbReference type="NCBIfam" id="TIGR02729">
    <property type="entry name" value="Obg_CgtA"/>
    <property type="match status" value="1"/>
</dbReference>
<dbReference type="NCBIfam" id="TIGR03595">
    <property type="entry name" value="Obg_CgtA_exten"/>
    <property type="match status" value="1"/>
</dbReference>
<dbReference type="NCBIfam" id="NF008954">
    <property type="entry name" value="PRK12296.1"/>
    <property type="match status" value="1"/>
</dbReference>
<dbReference type="NCBIfam" id="NF008955">
    <property type="entry name" value="PRK12297.1"/>
    <property type="match status" value="1"/>
</dbReference>
<dbReference type="NCBIfam" id="NF008956">
    <property type="entry name" value="PRK12299.1"/>
    <property type="match status" value="1"/>
</dbReference>
<dbReference type="NCBIfam" id="TIGR00231">
    <property type="entry name" value="small_GTP"/>
    <property type="match status" value="1"/>
</dbReference>
<dbReference type="PANTHER" id="PTHR11702">
    <property type="entry name" value="DEVELOPMENTALLY REGULATED GTP-BINDING PROTEIN-RELATED"/>
    <property type="match status" value="1"/>
</dbReference>
<dbReference type="PANTHER" id="PTHR11702:SF31">
    <property type="entry name" value="MITOCHONDRIAL RIBOSOME-ASSOCIATED GTPASE 2"/>
    <property type="match status" value="1"/>
</dbReference>
<dbReference type="Pfam" id="PF09269">
    <property type="entry name" value="DUF1967"/>
    <property type="match status" value="1"/>
</dbReference>
<dbReference type="Pfam" id="PF01018">
    <property type="entry name" value="GTP1_OBG"/>
    <property type="match status" value="1"/>
</dbReference>
<dbReference type="Pfam" id="PF01926">
    <property type="entry name" value="MMR_HSR1"/>
    <property type="match status" value="1"/>
</dbReference>
<dbReference type="PRINTS" id="PR00326">
    <property type="entry name" value="GTP1OBG"/>
</dbReference>
<dbReference type="SUPFAM" id="SSF102741">
    <property type="entry name" value="Obg GTP-binding protein C-terminal domain"/>
    <property type="match status" value="1"/>
</dbReference>
<dbReference type="SUPFAM" id="SSF82051">
    <property type="entry name" value="Obg GTP-binding protein N-terminal domain"/>
    <property type="match status" value="1"/>
</dbReference>
<dbReference type="SUPFAM" id="SSF52540">
    <property type="entry name" value="P-loop containing nucleoside triphosphate hydrolases"/>
    <property type="match status" value="1"/>
</dbReference>
<dbReference type="PROSITE" id="PS51710">
    <property type="entry name" value="G_OBG"/>
    <property type="match status" value="1"/>
</dbReference>
<dbReference type="PROSITE" id="PS00905">
    <property type="entry name" value="GTP1_OBG"/>
    <property type="match status" value="1"/>
</dbReference>
<dbReference type="PROSITE" id="PS51883">
    <property type="entry name" value="OBG"/>
    <property type="match status" value="1"/>
</dbReference>
<dbReference type="PROSITE" id="PS51881">
    <property type="entry name" value="OCT"/>
    <property type="match status" value="1"/>
</dbReference>
<organism>
    <name type="scientific">Elusimicrobium minutum (strain Pei191)</name>
    <dbReference type="NCBI Taxonomy" id="445932"/>
    <lineage>
        <taxon>Bacteria</taxon>
        <taxon>Pseudomonadati</taxon>
        <taxon>Elusimicrobiota</taxon>
        <taxon>Elusimicrobia</taxon>
        <taxon>Elusimicrobiales</taxon>
        <taxon>Elusimicrobiaceae</taxon>
        <taxon>Elusimicrobium</taxon>
    </lineage>
</organism>
<evidence type="ECO:0000255" key="1">
    <source>
        <dbReference type="HAMAP-Rule" id="MF_01454"/>
    </source>
</evidence>
<evidence type="ECO:0000255" key="2">
    <source>
        <dbReference type="PROSITE-ProRule" id="PRU01229"/>
    </source>
</evidence>
<evidence type="ECO:0000255" key="3">
    <source>
        <dbReference type="PROSITE-ProRule" id="PRU01231"/>
    </source>
</evidence>
<evidence type="ECO:0000256" key="4">
    <source>
        <dbReference type="SAM" id="MobiDB-lite"/>
    </source>
</evidence>
<proteinExistence type="inferred from homology"/>
<protein>
    <recommendedName>
        <fullName evidence="1">GTPase Obg</fullName>
        <ecNumber evidence="1">3.6.5.-</ecNumber>
    </recommendedName>
    <alternativeName>
        <fullName evidence="1">GTP-binding protein Obg</fullName>
    </alternativeName>
</protein>